<protein>
    <recommendedName>
        <fullName evidence="1">Triosephosphate isomerase</fullName>
        <shortName evidence="1">TIM</shortName>
        <shortName evidence="1">TPI</shortName>
        <ecNumber evidence="1">5.3.1.1</ecNumber>
    </recommendedName>
    <alternativeName>
        <fullName evidence="1">Triose-phosphate isomerase</fullName>
    </alternativeName>
</protein>
<comment type="function">
    <text evidence="1">Involved in the gluconeogenesis. Catalyzes stereospecifically the conversion of dihydroxyacetone phosphate (DHAP) to D-glyceraldehyde-3-phosphate (G3P).</text>
</comment>
<comment type="catalytic activity">
    <reaction evidence="1">
        <text>D-glyceraldehyde 3-phosphate = dihydroxyacetone phosphate</text>
        <dbReference type="Rhea" id="RHEA:18585"/>
        <dbReference type="ChEBI" id="CHEBI:57642"/>
        <dbReference type="ChEBI" id="CHEBI:59776"/>
        <dbReference type="EC" id="5.3.1.1"/>
    </reaction>
</comment>
<comment type="pathway">
    <text evidence="1">Carbohydrate biosynthesis; gluconeogenesis.</text>
</comment>
<comment type="pathway">
    <text evidence="1">Carbohydrate degradation; glycolysis; D-glyceraldehyde 3-phosphate from glycerone phosphate: step 1/1.</text>
</comment>
<comment type="subunit">
    <text evidence="1">Homodimer.</text>
</comment>
<comment type="subcellular location">
    <subcellularLocation>
        <location evidence="1">Cytoplasm</location>
    </subcellularLocation>
</comment>
<comment type="similarity">
    <text evidence="1">Belongs to the triosephosphate isomerase family.</text>
</comment>
<reference key="1">
    <citation type="journal article" date="2002" name="Nature">
        <title>Comparison of the genomes of two Xanthomonas pathogens with differing host specificities.</title>
        <authorList>
            <person name="da Silva A.C.R."/>
            <person name="Ferro J.A."/>
            <person name="Reinach F.C."/>
            <person name="Farah C.S."/>
            <person name="Furlan L.R."/>
            <person name="Quaggio R.B."/>
            <person name="Monteiro-Vitorello C.B."/>
            <person name="Van Sluys M.A."/>
            <person name="Almeida N.F. Jr."/>
            <person name="Alves L.M.C."/>
            <person name="do Amaral A.M."/>
            <person name="Bertolini M.C."/>
            <person name="Camargo L.E.A."/>
            <person name="Camarotte G."/>
            <person name="Cannavan F."/>
            <person name="Cardozo J."/>
            <person name="Chambergo F."/>
            <person name="Ciapina L.P."/>
            <person name="Cicarelli R.M.B."/>
            <person name="Coutinho L.L."/>
            <person name="Cursino-Santos J.R."/>
            <person name="El-Dorry H."/>
            <person name="Faria J.B."/>
            <person name="Ferreira A.J.S."/>
            <person name="Ferreira R.C.C."/>
            <person name="Ferro M.I.T."/>
            <person name="Formighieri E.F."/>
            <person name="Franco M.C."/>
            <person name="Greggio C.C."/>
            <person name="Gruber A."/>
            <person name="Katsuyama A.M."/>
            <person name="Kishi L.T."/>
            <person name="Leite R.P."/>
            <person name="Lemos E.G.M."/>
            <person name="Lemos M.V.F."/>
            <person name="Locali E.C."/>
            <person name="Machado M.A."/>
            <person name="Madeira A.M.B.N."/>
            <person name="Martinez-Rossi N.M."/>
            <person name="Martins E.C."/>
            <person name="Meidanis J."/>
            <person name="Menck C.F.M."/>
            <person name="Miyaki C.Y."/>
            <person name="Moon D.H."/>
            <person name="Moreira L.M."/>
            <person name="Novo M.T.M."/>
            <person name="Okura V.K."/>
            <person name="Oliveira M.C."/>
            <person name="Oliveira V.R."/>
            <person name="Pereira H.A."/>
            <person name="Rossi A."/>
            <person name="Sena J.A.D."/>
            <person name="Silva C."/>
            <person name="de Souza R.F."/>
            <person name="Spinola L.A.F."/>
            <person name="Takita M.A."/>
            <person name="Tamura R.E."/>
            <person name="Teixeira E.C."/>
            <person name="Tezza R.I.D."/>
            <person name="Trindade dos Santos M."/>
            <person name="Truffi D."/>
            <person name="Tsai S.M."/>
            <person name="White F.F."/>
            <person name="Setubal J.C."/>
            <person name="Kitajima J.P."/>
        </authorList>
    </citation>
    <scope>NUCLEOTIDE SEQUENCE [LARGE SCALE GENOMIC DNA]</scope>
    <source>
        <strain>ATCC 33913 / DSM 3586 / NCPPB 528 / LMG 568 / P 25</strain>
    </source>
</reference>
<feature type="chain" id="PRO_0000090322" description="Triosephosphate isomerase">
    <location>
        <begin position="1"/>
        <end position="251"/>
    </location>
</feature>
<feature type="active site" description="Electrophile" evidence="1">
    <location>
        <position position="94"/>
    </location>
</feature>
<feature type="active site" description="Proton acceptor" evidence="1">
    <location>
        <position position="166"/>
    </location>
</feature>
<feature type="binding site" evidence="1">
    <location>
        <begin position="9"/>
        <end position="11"/>
    </location>
    <ligand>
        <name>substrate</name>
    </ligand>
</feature>
<feature type="binding site" evidence="1">
    <location>
        <position position="172"/>
    </location>
    <ligand>
        <name>substrate</name>
    </ligand>
</feature>
<feature type="binding site" evidence="1">
    <location>
        <position position="211"/>
    </location>
    <ligand>
        <name>substrate</name>
    </ligand>
</feature>
<feature type="binding site" evidence="1">
    <location>
        <begin position="232"/>
        <end position="233"/>
    </location>
    <ligand>
        <name>substrate</name>
    </ligand>
</feature>
<name>TPIS_XANCP</name>
<accession>Q8P7T0</accession>
<evidence type="ECO:0000255" key="1">
    <source>
        <dbReference type="HAMAP-Rule" id="MF_00147"/>
    </source>
</evidence>
<gene>
    <name evidence="1" type="primary">tpiA</name>
    <name type="ordered locus">XCC2531</name>
</gene>
<proteinExistence type="inferred from homology"/>
<dbReference type="EC" id="5.3.1.1" evidence="1"/>
<dbReference type="EMBL" id="AE008922">
    <property type="protein sequence ID" value="AAM41803.1"/>
    <property type="molecule type" value="Genomic_DNA"/>
</dbReference>
<dbReference type="RefSeq" id="NP_637879.1">
    <property type="nucleotide sequence ID" value="NC_003902.1"/>
</dbReference>
<dbReference type="RefSeq" id="WP_011037661.1">
    <property type="nucleotide sequence ID" value="NC_003902.1"/>
</dbReference>
<dbReference type="SMR" id="Q8P7T0"/>
<dbReference type="STRING" id="190485.XCC2531"/>
<dbReference type="EnsemblBacteria" id="AAM41803">
    <property type="protein sequence ID" value="AAM41803"/>
    <property type="gene ID" value="XCC2531"/>
</dbReference>
<dbReference type="KEGG" id="xcc:XCC2531"/>
<dbReference type="PATRIC" id="fig|190485.4.peg.2696"/>
<dbReference type="eggNOG" id="COG0149">
    <property type="taxonomic scope" value="Bacteria"/>
</dbReference>
<dbReference type="HOGENOM" id="CLU_024251_2_1_6"/>
<dbReference type="OrthoDB" id="9809429at2"/>
<dbReference type="UniPathway" id="UPA00109">
    <property type="reaction ID" value="UER00189"/>
</dbReference>
<dbReference type="UniPathway" id="UPA00138"/>
<dbReference type="Proteomes" id="UP000001010">
    <property type="component" value="Chromosome"/>
</dbReference>
<dbReference type="GO" id="GO:0005829">
    <property type="term" value="C:cytosol"/>
    <property type="evidence" value="ECO:0000318"/>
    <property type="project" value="GO_Central"/>
</dbReference>
<dbReference type="GO" id="GO:0004807">
    <property type="term" value="F:triose-phosphate isomerase activity"/>
    <property type="evidence" value="ECO:0000318"/>
    <property type="project" value="GO_Central"/>
</dbReference>
<dbReference type="GO" id="GO:0006094">
    <property type="term" value="P:gluconeogenesis"/>
    <property type="evidence" value="ECO:0000318"/>
    <property type="project" value="GO_Central"/>
</dbReference>
<dbReference type="GO" id="GO:0046166">
    <property type="term" value="P:glyceraldehyde-3-phosphate biosynthetic process"/>
    <property type="evidence" value="ECO:0000318"/>
    <property type="project" value="GO_Central"/>
</dbReference>
<dbReference type="GO" id="GO:0019563">
    <property type="term" value="P:glycerol catabolic process"/>
    <property type="evidence" value="ECO:0000318"/>
    <property type="project" value="GO_Central"/>
</dbReference>
<dbReference type="GO" id="GO:0006096">
    <property type="term" value="P:glycolytic process"/>
    <property type="evidence" value="ECO:0000318"/>
    <property type="project" value="GO_Central"/>
</dbReference>
<dbReference type="CDD" id="cd00311">
    <property type="entry name" value="TIM"/>
    <property type="match status" value="1"/>
</dbReference>
<dbReference type="FunFam" id="3.20.20.70:FF:000020">
    <property type="entry name" value="Triosephosphate isomerase"/>
    <property type="match status" value="1"/>
</dbReference>
<dbReference type="Gene3D" id="3.20.20.70">
    <property type="entry name" value="Aldolase class I"/>
    <property type="match status" value="1"/>
</dbReference>
<dbReference type="HAMAP" id="MF_00147_B">
    <property type="entry name" value="TIM_B"/>
    <property type="match status" value="1"/>
</dbReference>
<dbReference type="InterPro" id="IPR013785">
    <property type="entry name" value="Aldolase_TIM"/>
</dbReference>
<dbReference type="InterPro" id="IPR035990">
    <property type="entry name" value="TIM_sf"/>
</dbReference>
<dbReference type="InterPro" id="IPR022896">
    <property type="entry name" value="TrioseP_Isoase_bac/euk"/>
</dbReference>
<dbReference type="InterPro" id="IPR000652">
    <property type="entry name" value="Triosephosphate_isomerase"/>
</dbReference>
<dbReference type="InterPro" id="IPR020861">
    <property type="entry name" value="Triosephosphate_isomerase_AS"/>
</dbReference>
<dbReference type="NCBIfam" id="TIGR00419">
    <property type="entry name" value="tim"/>
    <property type="match status" value="1"/>
</dbReference>
<dbReference type="PANTHER" id="PTHR21139">
    <property type="entry name" value="TRIOSEPHOSPHATE ISOMERASE"/>
    <property type="match status" value="1"/>
</dbReference>
<dbReference type="PANTHER" id="PTHR21139:SF42">
    <property type="entry name" value="TRIOSEPHOSPHATE ISOMERASE"/>
    <property type="match status" value="1"/>
</dbReference>
<dbReference type="Pfam" id="PF00121">
    <property type="entry name" value="TIM"/>
    <property type="match status" value="1"/>
</dbReference>
<dbReference type="SUPFAM" id="SSF51351">
    <property type="entry name" value="Triosephosphate isomerase (TIM)"/>
    <property type="match status" value="1"/>
</dbReference>
<dbReference type="PROSITE" id="PS00171">
    <property type="entry name" value="TIM_1"/>
    <property type="match status" value="1"/>
</dbReference>
<dbReference type="PROSITE" id="PS51440">
    <property type="entry name" value="TIM_2"/>
    <property type="match status" value="1"/>
</dbReference>
<sequence>MRRKIVAGNWKLHGTRAFATELVAQVAAHMPLAGVDVVILPPLPYLGDLIEDFEAHHLAFGAQDVSSNEKGAYTGEVSASMLVDVGAEYGLVGHSERRQYHQESSELVARKFAAAMHAGLIPVLCVGESLEQREAGQTEAILRAQLEPVLSLVGSAGFARAVVAYEPIWAIGTGRTATPDQAQAVHAFIRGEVAKADARIADSLPILYGGSVKPDNASELFSQPDVDGGLVGGASLVAEDFLAIARAAAAC</sequence>
<organism>
    <name type="scientific">Xanthomonas campestris pv. campestris (strain ATCC 33913 / DSM 3586 / NCPPB 528 / LMG 568 / P 25)</name>
    <dbReference type="NCBI Taxonomy" id="190485"/>
    <lineage>
        <taxon>Bacteria</taxon>
        <taxon>Pseudomonadati</taxon>
        <taxon>Pseudomonadota</taxon>
        <taxon>Gammaproteobacteria</taxon>
        <taxon>Lysobacterales</taxon>
        <taxon>Lysobacteraceae</taxon>
        <taxon>Xanthomonas</taxon>
    </lineage>
</organism>
<keyword id="KW-0963">Cytoplasm</keyword>
<keyword id="KW-0312">Gluconeogenesis</keyword>
<keyword id="KW-0324">Glycolysis</keyword>
<keyword id="KW-0413">Isomerase</keyword>
<keyword id="KW-1185">Reference proteome</keyword>